<proteinExistence type="inferred from homology"/>
<dbReference type="EC" id="1.1.1.86" evidence="1"/>
<dbReference type="EMBL" id="CP001291">
    <property type="protein sequence ID" value="ACK70479.1"/>
    <property type="molecule type" value="Genomic_DNA"/>
</dbReference>
<dbReference type="RefSeq" id="WP_015954085.1">
    <property type="nucleotide sequence ID" value="NC_011729.1"/>
</dbReference>
<dbReference type="SMR" id="B7KF23"/>
<dbReference type="STRING" id="65393.PCC7424_2051"/>
<dbReference type="KEGG" id="cyc:PCC7424_2051"/>
<dbReference type="eggNOG" id="COG0059">
    <property type="taxonomic scope" value="Bacteria"/>
</dbReference>
<dbReference type="HOGENOM" id="CLU_033821_0_1_3"/>
<dbReference type="OrthoDB" id="9804088at2"/>
<dbReference type="UniPathway" id="UPA00047">
    <property type="reaction ID" value="UER00056"/>
</dbReference>
<dbReference type="UniPathway" id="UPA00049">
    <property type="reaction ID" value="UER00060"/>
</dbReference>
<dbReference type="Proteomes" id="UP000002384">
    <property type="component" value="Chromosome"/>
</dbReference>
<dbReference type="GO" id="GO:0005829">
    <property type="term" value="C:cytosol"/>
    <property type="evidence" value="ECO:0007669"/>
    <property type="project" value="TreeGrafter"/>
</dbReference>
<dbReference type="GO" id="GO:0004455">
    <property type="term" value="F:ketol-acid reductoisomerase activity"/>
    <property type="evidence" value="ECO:0007669"/>
    <property type="project" value="UniProtKB-UniRule"/>
</dbReference>
<dbReference type="GO" id="GO:0000287">
    <property type="term" value="F:magnesium ion binding"/>
    <property type="evidence" value="ECO:0007669"/>
    <property type="project" value="UniProtKB-UniRule"/>
</dbReference>
<dbReference type="GO" id="GO:0050661">
    <property type="term" value="F:NADP binding"/>
    <property type="evidence" value="ECO:0007669"/>
    <property type="project" value="InterPro"/>
</dbReference>
<dbReference type="GO" id="GO:0009097">
    <property type="term" value="P:isoleucine biosynthetic process"/>
    <property type="evidence" value="ECO:0007669"/>
    <property type="project" value="UniProtKB-UniRule"/>
</dbReference>
<dbReference type="GO" id="GO:0009099">
    <property type="term" value="P:L-valine biosynthetic process"/>
    <property type="evidence" value="ECO:0007669"/>
    <property type="project" value="UniProtKB-UniRule"/>
</dbReference>
<dbReference type="FunFam" id="3.40.50.720:FF:000023">
    <property type="entry name" value="Ketol-acid reductoisomerase (NADP(+))"/>
    <property type="match status" value="1"/>
</dbReference>
<dbReference type="Gene3D" id="6.10.240.10">
    <property type="match status" value="1"/>
</dbReference>
<dbReference type="Gene3D" id="3.40.50.720">
    <property type="entry name" value="NAD(P)-binding Rossmann-like Domain"/>
    <property type="match status" value="1"/>
</dbReference>
<dbReference type="HAMAP" id="MF_00435">
    <property type="entry name" value="IlvC"/>
    <property type="match status" value="1"/>
</dbReference>
<dbReference type="InterPro" id="IPR008927">
    <property type="entry name" value="6-PGluconate_DH-like_C_sf"/>
</dbReference>
<dbReference type="InterPro" id="IPR013023">
    <property type="entry name" value="KARI"/>
</dbReference>
<dbReference type="InterPro" id="IPR000506">
    <property type="entry name" value="KARI_C"/>
</dbReference>
<dbReference type="InterPro" id="IPR013116">
    <property type="entry name" value="KARI_N"/>
</dbReference>
<dbReference type="InterPro" id="IPR014359">
    <property type="entry name" value="KARI_prok"/>
</dbReference>
<dbReference type="InterPro" id="IPR036291">
    <property type="entry name" value="NAD(P)-bd_dom_sf"/>
</dbReference>
<dbReference type="NCBIfam" id="TIGR00465">
    <property type="entry name" value="ilvC"/>
    <property type="match status" value="1"/>
</dbReference>
<dbReference type="NCBIfam" id="NF004017">
    <property type="entry name" value="PRK05479.1"/>
    <property type="match status" value="1"/>
</dbReference>
<dbReference type="NCBIfam" id="NF009940">
    <property type="entry name" value="PRK13403.1"/>
    <property type="match status" value="1"/>
</dbReference>
<dbReference type="PANTHER" id="PTHR21371">
    <property type="entry name" value="KETOL-ACID REDUCTOISOMERASE, MITOCHONDRIAL"/>
    <property type="match status" value="1"/>
</dbReference>
<dbReference type="PANTHER" id="PTHR21371:SF1">
    <property type="entry name" value="KETOL-ACID REDUCTOISOMERASE, MITOCHONDRIAL"/>
    <property type="match status" value="1"/>
</dbReference>
<dbReference type="Pfam" id="PF01450">
    <property type="entry name" value="KARI_C"/>
    <property type="match status" value="1"/>
</dbReference>
<dbReference type="Pfam" id="PF07991">
    <property type="entry name" value="KARI_N"/>
    <property type="match status" value="1"/>
</dbReference>
<dbReference type="PIRSF" id="PIRSF000116">
    <property type="entry name" value="IlvC_gammaproteo"/>
    <property type="match status" value="1"/>
</dbReference>
<dbReference type="SUPFAM" id="SSF48179">
    <property type="entry name" value="6-phosphogluconate dehydrogenase C-terminal domain-like"/>
    <property type="match status" value="1"/>
</dbReference>
<dbReference type="SUPFAM" id="SSF51735">
    <property type="entry name" value="NAD(P)-binding Rossmann-fold domains"/>
    <property type="match status" value="1"/>
</dbReference>
<dbReference type="PROSITE" id="PS51851">
    <property type="entry name" value="KARI_C"/>
    <property type="match status" value="1"/>
</dbReference>
<dbReference type="PROSITE" id="PS51850">
    <property type="entry name" value="KARI_N"/>
    <property type="match status" value="1"/>
</dbReference>
<feature type="chain" id="PRO_1000190941" description="Ketol-acid reductoisomerase (NADP(+))">
    <location>
        <begin position="1"/>
        <end position="331"/>
    </location>
</feature>
<feature type="domain" description="KARI N-terminal Rossmann" evidence="2">
    <location>
        <begin position="2"/>
        <end position="182"/>
    </location>
</feature>
<feature type="domain" description="KARI C-terminal knotted" evidence="3">
    <location>
        <begin position="183"/>
        <end position="328"/>
    </location>
</feature>
<feature type="active site" evidence="1">
    <location>
        <position position="108"/>
    </location>
</feature>
<feature type="binding site" evidence="1">
    <location>
        <begin position="25"/>
        <end position="28"/>
    </location>
    <ligand>
        <name>NADP(+)</name>
        <dbReference type="ChEBI" id="CHEBI:58349"/>
    </ligand>
</feature>
<feature type="binding site" evidence="1">
    <location>
        <position position="51"/>
    </location>
    <ligand>
        <name>NADP(+)</name>
        <dbReference type="ChEBI" id="CHEBI:58349"/>
    </ligand>
</feature>
<feature type="binding site" evidence="1">
    <location>
        <position position="53"/>
    </location>
    <ligand>
        <name>NADP(+)</name>
        <dbReference type="ChEBI" id="CHEBI:58349"/>
    </ligand>
</feature>
<feature type="binding site" evidence="1">
    <location>
        <begin position="83"/>
        <end position="86"/>
    </location>
    <ligand>
        <name>NADP(+)</name>
        <dbReference type="ChEBI" id="CHEBI:58349"/>
    </ligand>
</feature>
<feature type="binding site" evidence="1">
    <location>
        <position position="134"/>
    </location>
    <ligand>
        <name>NADP(+)</name>
        <dbReference type="ChEBI" id="CHEBI:58349"/>
    </ligand>
</feature>
<feature type="binding site" evidence="1">
    <location>
        <position position="191"/>
    </location>
    <ligand>
        <name>Mg(2+)</name>
        <dbReference type="ChEBI" id="CHEBI:18420"/>
        <label>1</label>
    </ligand>
</feature>
<feature type="binding site" evidence="1">
    <location>
        <position position="191"/>
    </location>
    <ligand>
        <name>Mg(2+)</name>
        <dbReference type="ChEBI" id="CHEBI:18420"/>
        <label>2</label>
    </ligand>
</feature>
<feature type="binding site" evidence="1">
    <location>
        <position position="195"/>
    </location>
    <ligand>
        <name>Mg(2+)</name>
        <dbReference type="ChEBI" id="CHEBI:18420"/>
        <label>1</label>
    </ligand>
</feature>
<feature type="binding site" evidence="1">
    <location>
        <position position="227"/>
    </location>
    <ligand>
        <name>Mg(2+)</name>
        <dbReference type="ChEBI" id="CHEBI:18420"/>
        <label>2</label>
    </ligand>
</feature>
<feature type="binding site" evidence="1">
    <location>
        <position position="231"/>
    </location>
    <ligand>
        <name>Mg(2+)</name>
        <dbReference type="ChEBI" id="CHEBI:18420"/>
        <label>2</label>
    </ligand>
</feature>
<feature type="binding site" evidence="1">
    <location>
        <position position="252"/>
    </location>
    <ligand>
        <name>substrate</name>
    </ligand>
</feature>
<organism>
    <name type="scientific">Gloeothece citriformis (strain PCC 7424)</name>
    <name type="common">Cyanothece sp. (strain PCC 7424)</name>
    <dbReference type="NCBI Taxonomy" id="65393"/>
    <lineage>
        <taxon>Bacteria</taxon>
        <taxon>Bacillati</taxon>
        <taxon>Cyanobacteriota</taxon>
        <taxon>Cyanophyceae</taxon>
        <taxon>Oscillatoriophycideae</taxon>
        <taxon>Chroococcales</taxon>
        <taxon>Aphanothecaceae</taxon>
        <taxon>Gloeothece</taxon>
        <taxon>Gloeothece citriformis</taxon>
    </lineage>
</organism>
<sequence length="331" mass="36217">MARMYYDEDGNLDLLANKTVAIIGYGSQGHAHALNLKDSGIDVIVGLYPGSKSAKKAEEAGLTVHSVADAAAKADWIMILLPDEVQKSVYKQEIEPHLKEGKVLSFAHGFNIHFGQIVPPPTVDVVMVAPKGPGHLVRRTYTQGEGVPCLFAVFQDASGQARDRAMAYAKGIGGTRAGILETSFREETETDLFGEQVVLCGGLSALIKAGFQTLVDAGYQPELAYFECLHEVKLIVDLIVEGGLANMRDSISNTAEYGDYTRGPRIVTDETRAEMRKILQEIQSGQFAREFVLENQSGKPGFTAMRRQEAEHPIEEVGKDLRAMFSWLKKA</sequence>
<protein>
    <recommendedName>
        <fullName evidence="1">Ketol-acid reductoisomerase (NADP(+))</fullName>
        <shortName evidence="1">KARI</shortName>
        <ecNumber evidence="1">1.1.1.86</ecNumber>
    </recommendedName>
    <alternativeName>
        <fullName evidence="1">Acetohydroxy-acid isomeroreductase</fullName>
        <shortName evidence="1">AHIR</shortName>
    </alternativeName>
    <alternativeName>
        <fullName evidence="1">Alpha-keto-beta-hydroxylacyl reductoisomerase</fullName>
    </alternativeName>
    <alternativeName>
        <fullName evidence="1">Ketol-acid reductoisomerase type 1</fullName>
    </alternativeName>
    <alternativeName>
        <fullName evidence="1">Ketol-acid reductoisomerase type I</fullName>
    </alternativeName>
</protein>
<accession>B7KF23</accession>
<gene>
    <name evidence="1" type="primary">ilvC</name>
    <name type="ordered locus">PCC7424_2051</name>
</gene>
<keyword id="KW-0028">Amino-acid biosynthesis</keyword>
<keyword id="KW-0100">Branched-chain amino acid biosynthesis</keyword>
<keyword id="KW-0460">Magnesium</keyword>
<keyword id="KW-0479">Metal-binding</keyword>
<keyword id="KW-0521">NADP</keyword>
<keyword id="KW-0560">Oxidoreductase</keyword>
<keyword id="KW-1185">Reference proteome</keyword>
<reference key="1">
    <citation type="journal article" date="2011" name="MBio">
        <title>Novel metabolic attributes of the genus Cyanothece, comprising a group of unicellular nitrogen-fixing Cyanobacteria.</title>
        <authorList>
            <person name="Bandyopadhyay A."/>
            <person name="Elvitigala T."/>
            <person name="Welsh E."/>
            <person name="Stockel J."/>
            <person name="Liberton M."/>
            <person name="Min H."/>
            <person name="Sherman L.A."/>
            <person name="Pakrasi H.B."/>
        </authorList>
    </citation>
    <scope>NUCLEOTIDE SEQUENCE [LARGE SCALE GENOMIC DNA]</scope>
    <source>
        <strain>PCC 7424</strain>
    </source>
</reference>
<comment type="function">
    <text evidence="1">Involved in the biosynthesis of branched-chain amino acids (BCAA). Catalyzes an alkyl-migration followed by a ketol-acid reduction of (S)-2-acetolactate (S2AL) to yield (R)-2,3-dihydroxy-isovalerate. In the isomerase reaction, S2AL is rearranged via a Mg-dependent methyl migration to produce 3-hydroxy-3-methyl-2-ketobutyrate (HMKB). In the reductase reaction, this 2-ketoacid undergoes a metal-dependent reduction by NADPH to yield (R)-2,3-dihydroxy-isovalerate.</text>
</comment>
<comment type="catalytic activity">
    <reaction evidence="1">
        <text>(2R)-2,3-dihydroxy-3-methylbutanoate + NADP(+) = (2S)-2-acetolactate + NADPH + H(+)</text>
        <dbReference type="Rhea" id="RHEA:22068"/>
        <dbReference type="ChEBI" id="CHEBI:15378"/>
        <dbReference type="ChEBI" id="CHEBI:49072"/>
        <dbReference type="ChEBI" id="CHEBI:57783"/>
        <dbReference type="ChEBI" id="CHEBI:58349"/>
        <dbReference type="ChEBI" id="CHEBI:58476"/>
        <dbReference type="EC" id="1.1.1.86"/>
    </reaction>
</comment>
<comment type="catalytic activity">
    <reaction evidence="1">
        <text>(2R,3R)-2,3-dihydroxy-3-methylpentanoate + NADP(+) = (S)-2-ethyl-2-hydroxy-3-oxobutanoate + NADPH + H(+)</text>
        <dbReference type="Rhea" id="RHEA:13493"/>
        <dbReference type="ChEBI" id="CHEBI:15378"/>
        <dbReference type="ChEBI" id="CHEBI:49256"/>
        <dbReference type="ChEBI" id="CHEBI:49258"/>
        <dbReference type="ChEBI" id="CHEBI:57783"/>
        <dbReference type="ChEBI" id="CHEBI:58349"/>
        <dbReference type="EC" id="1.1.1.86"/>
    </reaction>
</comment>
<comment type="cofactor">
    <cofactor evidence="1">
        <name>Mg(2+)</name>
        <dbReference type="ChEBI" id="CHEBI:18420"/>
    </cofactor>
    <text evidence="1">Binds 2 magnesium ions per subunit.</text>
</comment>
<comment type="pathway">
    <text evidence="1">Amino-acid biosynthesis; L-isoleucine biosynthesis; L-isoleucine from 2-oxobutanoate: step 2/4.</text>
</comment>
<comment type="pathway">
    <text evidence="1">Amino-acid biosynthesis; L-valine biosynthesis; L-valine from pyruvate: step 2/4.</text>
</comment>
<comment type="similarity">
    <text evidence="1">Belongs to the ketol-acid reductoisomerase family.</text>
</comment>
<evidence type="ECO:0000255" key="1">
    <source>
        <dbReference type="HAMAP-Rule" id="MF_00435"/>
    </source>
</evidence>
<evidence type="ECO:0000255" key="2">
    <source>
        <dbReference type="PROSITE-ProRule" id="PRU01197"/>
    </source>
</evidence>
<evidence type="ECO:0000255" key="3">
    <source>
        <dbReference type="PROSITE-ProRule" id="PRU01198"/>
    </source>
</evidence>
<name>ILVC_GLOC7</name>